<comment type="function">
    <text evidence="1">Catalyzes the complicated ring closure reaction between the two acyclic compounds 1-deoxy-D-xylulose-5-phosphate (DXP) and 3-amino-2-oxopropyl phosphate (1-amino-acetone-3-phosphate or AAP) to form pyridoxine 5'-phosphate (PNP) and inorganic phosphate.</text>
</comment>
<comment type="catalytic activity">
    <reaction evidence="1">
        <text>3-amino-2-oxopropyl phosphate + 1-deoxy-D-xylulose 5-phosphate = pyridoxine 5'-phosphate + phosphate + 2 H2O + H(+)</text>
        <dbReference type="Rhea" id="RHEA:15265"/>
        <dbReference type="ChEBI" id="CHEBI:15377"/>
        <dbReference type="ChEBI" id="CHEBI:15378"/>
        <dbReference type="ChEBI" id="CHEBI:43474"/>
        <dbReference type="ChEBI" id="CHEBI:57279"/>
        <dbReference type="ChEBI" id="CHEBI:57792"/>
        <dbReference type="ChEBI" id="CHEBI:58589"/>
        <dbReference type="EC" id="2.6.99.2"/>
    </reaction>
</comment>
<comment type="pathway">
    <text evidence="1">Cofactor biosynthesis; pyridoxine 5'-phosphate biosynthesis; pyridoxine 5'-phosphate from D-erythrose 4-phosphate: step 5/5.</text>
</comment>
<comment type="subunit">
    <text evidence="1">Homooctamer; tetramer of dimers.</text>
</comment>
<comment type="subcellular location">
    <subcellularLocation>
        <location evidence="1">Cytoplasm</location>
    </subcellularLocation>
</comment>
<comment type="similarity">
    <text evidence="1">Belongs to the PNP synthase family.</text>
</comment>
<evidence type="ECO:0000255" key="1">
    <source>
        <dbReference type="HAMAP-Rule" id="MF_00279"/>
    </source>
</evidence>
<keyword id="KW-0963">Cytoplasm</keyword>
<keyword id="KW-0664">Pyridoxine biosynthesis</keyword>
<keyword id="KW-0808">Transferase</keyword>
<sequence>MRFGLNIDHIVTLREVRKTYEPEILEALFIAKNTHKVDLITIHLREDKRHIQNEDVLRLLEISPLPINIECSINAHITDFLCSLKNKPSKVTIVPENRNEVTTEGGLDCSLKGLGETIKAYQNKGIEVSLFIDPLEDALHFAREHQVKQVEFHTGVYANLHNALYSNANNQIHAISALKEKSPKELKEELHNAFLQLRKMSKEAFFMGIMVCAGHGLNYSNVKELLKIPSLRELNIGHSVISKAVLVGLEKAILEMAQLIKR</sequence>
<accession>Q17ZN1</accession>
<reference key="1">
    <citation type="journal article" date="2006" name="PLoS Genet.">
        <title>Who ate whom? Adaptive Helicobacter genomic changes that accompanied a host jump from early humans to large felines.</title>
        <authorList>
            <person name="Eppinger M."/>
            <person name="Baar C."/>
            <person name="Linz B."/>
            <person name="Raddatz G."/>
            <person name="Lanz C."/>
            <person name="Keller H."/>
            <person name="Morelli G."/>
            <person name="Gressmann H."/>
            <person name="Achtman M."/>
            <person name="Schuster S.C."/>
        </authorList>
    </citation>
    <scope>NUCLEOTIDE SEQUENCE [LARGE SCALE GENOMIC DNA]</scope>
    <source>
        <strain>Sheeba</strain>
    </source>
</reference>
<gene>
    <name evidence="1" type="primary">pdxJ</name>
    <name type="ordered locus">Hac_0031</name>
</gene>
<dbReference type="EC" id="2.6.99.2" evidence="1"/>
<dbReference type="EMBL" id="AM260522">
    <property type="protein sequence ID" value="CAJ98895.1"/>
    <property type="molecule type" value="Genomic_DNA"/>
</dbReference>
<dbReference type="RefSeq" id="WP_011577017.1">
    <property type="nucleotide sequence ID" value="NC_008229.1"/>
</dbReference>
<dbReference type="SMR" id="Q17ZN1"/>
<dbReference type="STRING" id="382638.Hac_0031"/>
<dbReference type="GeneID" id="31757587"/>
<dbReference type="KEGG" id="hac:Hac_0031"/>
<dbReference type="eggNOG" id="COG0854">
    <property type="taxonomic scope" value="Bacteria"/>
</dbReference>
<dbReference type="HOGENOM" id="CLU_074563_0_0_7"/>
<dbReference type="OrthoDB" id="9806590at2"/>
<dbReference type="BioCyc" id="HACI382638:HAC_RS00150-MONOMER"/>
<dbReference type="UniPathway" id="UPA00244">
    <property type="reaction ID" value="UER00313"/>
</dbReference>
<dbReference type="Proteomes" id="UP000000775">
    <property type="component" value="Chromosome"/>
</dbReference>
<dbReference type="GO" id="GO:0005829">
    <property type="term" value="C:cytosol"/>
    <property type="evidence" value="ECO:0007669"/>
    <property type="project" value="TreeGrafter"/>
</dbReference>
<dbReference type="GO" id="GO:0033856">
    <property type="term" value="F:pyridoxine 5'-phosphate synthase activity"/>
    <property type="evidence" value="ECO:0007669"/>
    <property type="project" value="UniProtKB-EC"/>
</dbReference>
<dbReference type="GO" id="GO:0008615">
    <property type="term" value="P:pyridoxine biosynthetic process"/>
    <property type="evidence" value="ECO:0007669"/>
    <property type="project" value="UniProtKB-UniRule"/>
</dbReference>
<dbReference type="CDD" id="cd00003">
    <property type="entry name" value="PNPsynthase"/>
    <property type="match status" value="1"/>
</dbReference>
<dbReference type="FunFam" id="3.20.20.70:FF:000264">
    <property type="entry name" value="Pyridoxine 5'-phosphate synthase"/>
    <property type="match status" value="1"/>
</dbReference>
<dbReference type="Gene3D" id="3.20.20.70">
    <property type="entry name" value="Aldolase class I"/>
    <property type="match status" value="1"/>
</dbReference>
<dbReference type="HAMAP" id="MF_00279">
    <property type="entry name" value="PdxJ"/>
    <property type="match status" value="1"/>
</dbReference>
<dbReference type="InterPro" id="IPR013785">
    <property type="entry name" value="Aldolase_TIM"/>
</dbReference>
<dbReference type="InterPro" id="IPR004569">
    <property type="entry name" value="PyrdxlP_synth_PdxJ"/>
</dbReference>
<dbReference type="InterPro" id="IPR036130">
    <property type="entry name" value="Pyridoxine-5'_phos_synth"/>
</dbReference>
<dbReference type="NCBIfam" id="TIGR00559">
    <property type="entry name" value="pdxJ"/>
    <property type="match status" value="1"/>
</dbReference>
<dbReference type="NCBIfam" id="NF003625">
    <property type="entry name" value="PRK05265.1-3"/>
    <property type="match status" value="1"/>
</dbReference>
<dbReference type="NCBIfam" id="NF003627">
    <property type="entry name" value="PRK05265.1-5"/>
    <property type="match status" value="1"/>
</dbReference>
<dbReference type="PANTHER" id="PTHR30456">
    <property type="entry name" value="PYRIDOXINE 5'-PHOSPHATE SYNTHASE"/>
    <property type="match status" value="1"/>
</dbReference>
<dbReference type="PANTHER" id="PTHR30456:SF0">
    <property type="entry name" value="PYRIDOXINE 5'-PHOSPHATE SYNTHASE"/>
    <property type="match status" value="1"/>
</dbReference>
<dbReference type="Pfam" id="PF03740">
    <property type="entry name" value="PdxJ"/>
    <property type="match status" value="1"/>
</dbReference>
<dbReference type="SUPFAM" id="SSF63892">
    <property type="entry name" value="Pyridoxine 5'-phosphate synthase"/>
    <property type="match status" value="1"/>
</dbReference>
<feature type="chain" id="PRO_1000022374" description="Pyridoxine 5'-phosphate synthase">
    <location>
        <begin position="1"/>
        <end position="262"/>
    </location>
</feature>
<feature type="active site" description="Proton acceptor" evidence="1">
    <location>
        <position position="43"/>
    </location>
</feature>
<feature type="active site" description="Proton acceptor" evidence="1">
    <location>
        <position position="70"/>
    </location>
</feature>
<feature type="active site" description="Proton donor" evidence="1">
    <location>
        <position position="215"/>
    </location>
</feature>
<feature type="binding site" evidence="1">
    <location>
        <position position="6"/>
    </location>
    <ligand>
        <name>3-amino-2-oxopropyl phosphate</name>
        <dbReference type="ChEBI" id="CHEBI:57279"/>
    </ligand>
</feature>
<feature type="binding site" evidence="1">
    <location>
        <begin position="8"/>
        <end position="9"/>
    </location>
    <ligand>
        <name>1-deoxy-D-xylulose 5-phosphate</name>
        <dbReference type="ChEBI" id="CHEBI:57792"/>
    </ligand>
</feature>
<feature type="binding site" evidence="1">
    <location>
        <position position="17"/>
    </location>
    <ligand>
        <name>3-amino-2-oxopropyl phosphate</name>
        <dbReference type="ChEBI" id="CHEBI:57279"/>
    </ligand>
</feature>
<feature type="binding site" evidence="1">
    <location>
        <position position="45"/>
    </location>
    <ligand>
        <name>1-deoxy-D-xylulose 5-phosphate</name>
        <dbReference type="ChEBI" id="CHEBI:57792"/>
    </ligand>
</feature>
<feature type="binding site" evidence="1">
    <location>
        <position position="50"/>
    </location>
    <ligand>
        <name>1-deoxy-D-xylulose 5-phosphate</name>
        <dbReference type="ChEBI" id="CHEBI:57792"/>
    </ligand>
</feature>
<feature type="binding site" evidence="1">
    <location>
        <position position="102"/>
    </location>
    <ligand>
        <name>1-deoxy-D-xylulose 5-phosphate</name>
        <dbReference type="ChEBI" id="CHEBI:57792"/>
    </ligand>
</feature>
<feature type="binding site" evidence="1">
    <location>
        <position position="216"/>
    </location>
    <ligand>
        <name>3-amino-2-oxopropyl phosphate</name>
        <dbReference type="ChEBI" id="CHEBI:57279"/>
    </ligand>
</feature>
<feature type="binding site" evidence="1">
    <location>
        <begin position="237"/>
        <end position="238"/>
    </location>
    <ligand>
        <name>3-amino-2-oxopropyl phosphate</name>
        <dbReference type="ChEBI" id="CHEBI:57279"/>
    </ligand>
</feature>
<feature type="site" description="Transition state stabilizer" evidence="1">
    <location>
        <position position="151"/>
    </location>
</feature>
<organism>
    <name type="scientific">Helicobacter acinonychis (strain Sheeba)</name>
    <dbReference type="NCBI Taxonomy" id="382638"/>
    <lineage>
        <taxon>Bacteria</taxon>
        <taxon>Pseudomonadati</taxon>
        <taxon>Campylobacterota</taxon>
        <taxon>Epsilonproteobacteria</taxon>
        <taxon>Campylobacterales</taxon>
        <taxon>Helicobacteraceae</taxon>
        <taxon>Helicobacter</taxon>
    </lineage>
</organism>
<name>PDXJ_HELAH</name>
<proteinExistence type="inferred from homology"/>
<protein>
    <recommendedName>
        <fullName evidence="1">Pyridoxine 5'-phosphate synthase</fullName>
        <shortName evidence="1">PNP synthase</shortName>
        <ecNumber evidence="1">2.6.99.2</ecNumber>
    </recommendedName>
</protein>